<reference key="1">
    <citation type="journal article" date="2007" name="Nature">
        <title>Evolution of genes and genomes on the Drosophila phylogeny.</title>
        <authorList>
            <consortium name="Drosophila 12 genomes consortium"/>
        </authorList>
    </citation>
    <scope>NUCLEOTIDE SEQUENCE [LARGE SCALE GENOMIC DNA]</scope>
    <source>
        <strain>Tucson 14030-0811.24</strain>
    </source>
</reference>
<dbReference type="EC" id="5.6.2.-" evidence="2"/>
<dbReference type="EMBL" id="CH964239">
    <property type="protein sequence ID" value="EDW82871.1"/>
    <property type="molecule type" value="Genomic_DNA"/>
</dbReference>
<dbReference type="RefSeq" id="XP_002071885.1">
    <property type="nucleotide sequence ID" value="XM_002071849.1"/>
</dbReference>
<dbReference type="SMR" id="B4NDG5"/>
<dbReference type="STRING" id="7260.B4NDG5"/>
<dbReference type="EnsemblMetazoa" id="FBtr0255574">
    <property type="protein sequence ID" value="FBpp0254066"/>
    <property type="gene ID" value="FBgn0226882"/>
</dbReference>
<dbReference type="eggNOG" id="KOG1132">
    <property type="taxonomic scope" value="Eukaryota"/>
</dbReference>
<dbReference type="HOGENOM" id="CLU_006515_4_0_1"/>
<dbReference type="OMA" id="NCATIVA"/>
<dbReference type="OrthoDB" id="19182at2759"/>
<dbReference type="PhylomeDB" id="B4NDG5"/>
<dbReference type="Proteomes" id="UP000007798">
    <property type="component" value="Unassembled WGS sequence"/>
</dbReference>
<dbReference type="GO" id="GO:0005634">
    <property type="term" value="C:nucleus"/>
    <property type="evidence" value="ECO:0000250"/>
    <property type="project" value="UniProtKB"/>
</dbReference>
<dbReference type="GO" id="GO:0051539">
    <property type="term" value="F:4 iron, 4 sulfur cluster binding"/>
    <property type="evidence" value="ECO:0007669"/>
    <property type="project" value="UniProtKB-UniRule"/>
</dbReference>
<dbReference type="GO" id="GO:0005524">
    <property type="term" value="F:ATP binding"/>
    <property type="evidence" value="ECO:0000250"/>
    <property type="project" value="UniProtKB"/>
</dbReference>
<dbReference type="GO" id="GO:0016887">
    <property type="term" value="F:ATP hydrolysis activity"/>
    <property type="evidence" value="ECO:0007669"/>
    <property type="project" value="RHEA"/>
</dbReference>
<dbReference type="GO" id="GO:0003682">
    <property type="term" value="F:chromatin binding"/>
    <property type="evidence" value="ECO:0007669"/>
    <property type="project" value="EnsemblMetazoa"/>
</dbReference>
<dbReference type="GO" id="GO:0003677">
    <property type="term" value="F:DNA binding"/>
    <property type="evidence" value="ECO:0007669"/>
    <property type="project" value="UniProtKB-UniRule"/>
</dbReference>
<dbReference type="GO" id="GO:0003678">
    <property type="term" value="F:DNA helicase activity"/>
    <property type="evidence" value="ECO:0000250"/>
    <property type="project" value="UniProtKB"/>
</dbReference>
<dbReference type="GO" id="GO:0070182">
    <property type="term" value="F:DNA polymerase binding"/>
    <property type="evidence" value="ECO:0007669"/>
    <property type="project" value="TreeGrafter"/>
</dbReference>
<dbReference type="GO" id="GO:0046872">
    <property type="term" value="F:metal ion binding"/>
    <property type="evidence" value="ECO:0007669"/>
    <property type="project" value="UniProtKB-UniRule"/>
</dbReference>
<dbReference type="GO" id="GO:0006310">
    <property type="term" value="P:DNA recombination"/>
    <property type="evidence" value="ECO:0007669"/>
    <property type="project" value="InterPro"/>
</dbReference>
<dbReference type="GO" id="GO:0006281">
    <property type="term" value="P:DNA repair"/>
    <property type="evidence" value="ECO:0007669"/>
    <property type="project" value="UniProtKB-UniRule"/>
</dbReference>
<dbReference type="GO" id="GO:0006260">
    <property type="term" value="P:DNA replication"/>
    <property type="evidence" value="ECO:0007669"/>
    <property type="project" value="InterPro"/>
</dbReference>
<dbReference type="GO" id="GO:0036098">
    <property type="term" value="P:male germ-line stem cell population maintenance"/>
    <property type="evidence" value="ECO:0007669"/>
    <property type="project" value="EnsemblMetazoa"/>
</dbReference>
<dbReference type="GO" id="GO:0045910">
    <property type="term" value="P:negative regulation of DNA recombination"/>
    <property type="evidence" value="ECO:0007669"/>
    <property type="project" value="TreeGrafter"/>
</dbReference>
<dbReference type="GO" id="GO:1904430">
    <property type="term" value="P:negative regulation of t-circle formation"/>
    <property type="evidence" value="ECO:0007669"/>
    <property type="project" value="TreeGrafter"/>
</dbReference>
<dbReference type="GO" id="GO:0010569">
    <property type="term" value="P:regulation of double-strand break repair via homologous recombination"/>
    <property type="evidence" value="ECO:0000250"/>
    <property type="project" value="UniProtKB"/>
</dbReference>
<dbReference type="GO" id="GO:0090657">
    <property type="term" value="P:telomeric loop disassembly"/>
    <property type="evidence" value="ECO:0007669"/>
    <property type="project" value="TreeGrafter"/>
</dbReference>
<dbReference type="CDD" id="cd17970">
    <property type="entry name" value="DEAHc_FancJ"/>
    <property type="match status" value="1"/>
</dbReference>
<dbReference type="CDD" id="cd13932">
    <property type="entry name" value="HN_RTEL1"/>
    <property type="match status" value="1"/>
</dbReference>
<dbReference type="CDD" id="cd18788">
    <property type="entry name" value="SF2_C_XPD"/>
    <property type="match status" value="1"/>
</dbReference>
<dbReference type="FunFam" id="3.40.50.300:FF:000431">
    <property type="entry name" value="Regulator of telomere elongation helicase 1"/>
    <property type="match status" value="1"/>
</dbReference>
<dbReference type="FunFam" id="3.40.50.300:FF:000691">
    <property type="entry name" value="Regulator of telomere elongation helicase 1"/>
    <property type="match status" value="1"/>
</dbReference>
<dbReference type="FunFam" id="1.20.1160.20:FF:000011">
    <property type="entry name" value="Regulator of telomere elongation helicase 1 homolog"/>
    <property type="match status" value="1"/>
</dbReference>
<dbReference type="Gene3D" id="1.20.1160.20">
    <property type="match status" value="1"/>
</dbReference>
<dbReference type="Gene3D" id="3.40.50.300">
    <property type="entry name" value="P-loop containing nucleotide triphosphate hydrolases"/>
    <property type="match status" value="2"/>
</dbReference>
<dbReference type="HAMAP" id="MF_03065">
    <property type="entry name" value="RTEL1"/>
    <property type="match status" value="1"/>
</dbReference>
<dbReference type="InterPro" id="IPR006555">
    <property type="entry name" value="ATP-dep_Helicase_C"/>
</dbReference>
<dbReference type="InterPro" id="IPR045028">
    <property type="entry name" value="DinG/Rad3-like"/>
</dbReference>
<dbReference type="InterPro" id="IPR014013">
    <property type="entry name" value="Helic_SF1/SF2_ATP-bd_DinG/Rad3"/>
</dbReference>
<dbReference type="InterPro" id="IPR006554">
    <property type="entry name" value="Helicase-like_DEXD_c2"/>
</dbReference>
<dbReference type="InterPro" id="IPR014001">
    <property type="entry name" value="Helicase_ATP-bd"/>
</dbReference>
<dbReference type="InterPro" id="IPR049909">
    <property type="entry name" value="HHD_RTEL1"/>
</dbReference>
<dbReference type="InterPro" id="IPR027417">
    <property type="entry name" value="P-loop_NTPase"/>
</dbReference>
<dbReference type="InterPro" id="IPR010614">
    <property type="entry name" value="RAD3-like_helicase_DEAD"/>
</dbReference>
<dbReference type="InterPro" id="IPR013020">
    <property type="entry name" value="Rad3/Chl1-like"/>
</dbReference>
<dbReference type="InterPro" id="IPR030845">
    <property type="entry name" value="RTEL1"/>
</dbReference>
<dbReference type="NCBIfam" id="TIGR00604">
    <property type="entry name" value="rad3"/>
    <property type="match status" value="1"/>
</dbReference>
<dbReference type="PANTHER" id="PTHR11472">
    <property type="entry name" value="DNA REPAIR DEAD HELICASE RAD3/XP-D SUBFAMILY MEMBER"/>
    <property type="match status" value="1"/>
</dbReference>
<dbReference type="PANTHER" id="PTHR11472:SF34">
    <property type="entry name" value="REGULATOR OF TELOMERE ELONGATION HELICASE 1"/>
    <property type="match status" value="1"/>
</dbReference>
<dbReference type="Pfam" id="PF23109">
    <property type="entry name" value="ARCH_RTEL1"/>
    <property type="match status" value="1"/>
</dbReference>
<dbReference type="Pfam" id="PF06733">
    <property type="entry name" value="DEAD_2"/>
    <property type="match status" value="1"/>
</dbReference>
<dbReference type="Pfam" id="PF13307">
    <property type="entry name" value="Helicase_C_2"/>
    <property type="match status" value="1"/>
</dbReference>
<dbReference type="SMART" id="SM00487">
    <property type="entry name" value="DEXDc"/>
    <property type="match status" value="1"/>
</dbReference>
<dbReference type="SMART" id="SM00488">
    <property type="entry name" value="DEXDc2"/>
    <property type="match status" value="1"/>
</dbReference>
<dbReference type="SMART" id="SM00491">
    <property type="entry name" value="HELICc2"/>
    <property type="match status" value="1"/>
</dbReference>
<dbReference type="SUPFAM" id="SSF52540">
    <property type="entry name" value="P-loop containing nucleoside triphosphate hydrolases"/>
    <property type="match status" value="2"/>
</dbReference>
<dbReference type="PROSITE" id="PS51193">
    <property type="entry name" value="HELICASE_ATP_BIND_2"/>
    <property type="match status" value="1"/>
</dbReference>
<comment type="function">
    <text evidence="2">A probable ATP-dependent DNA helicase implicated in DNA repair and the maintenance of genomic stability. Acts as an anti-recombinase to counteract toxic recombination and limit crossover during meiosis. Regulates meiotic recombination and crossover homeostasis by physically dissociating strand invasion events and thereby promotes noncrossover repair by meiotic synthesis dependent strand annealing (SDSA) as well as disassembly of D loop recombination intermediates.</text>
</comment>
<comment type="catalytic activity">
    <reaction evidence="2">
        <text>ATP + H2O = ADP + phosphate + H(+)</text>
        <dbReference type="Rhea" id="RHEA:13065"/>
        <dbReference type="ChEBI" id="CHEBI:15377"/>
        <dbReference type="ChEBI" id="CHEBI:15378"/>
        <dbReference type="ChEBI" id="CHEBI:30616"/>
        <dbReference type="ChEBI" id="CHEBI:43474"/>
        <dbReference type="ChEBI" id="CHEBI:456216"/>
    </reaction>
</comment>
<comment type="subcellular location">
    <subcellularLocation>
        <location evidence="2">Nucleus</location>
    </subcellularLocation>
</comment>
<comment type="similarity">
    <text evidence="2">Belongs to the helicase family. RAD3/XPD subfamily.</text>
</comment>
<sequence>MPESIIAGIPVHFPFEPYEVQRAFMEKVIICLRDGTNGVLESPTGTGKTLSLLCSSLAWIRTRQSEQQKQIRKLQDAANNTKVGPTGIVPGEAAELALTVGKANNWGVPKVIYASRTHSQLTQAMRELKRSAYAGMRSVVLGSRDQLCIHPEVMREQGNSNKVNMCKMRVHSKTCSFQLRVESKKDHPDFRGPSIMDIEDLVKVGQKLKMCPYFASKELVNDADITFMPYNYLLDPMARKANKIELSNTIVILDEAHNIEKICEESASVQIKSSDVAVAIEDVTHIMRIFTSADSQDFSGDEPKDFTLDDLTLLKEMLLELEKAIDGVVVDNLAEGTTYPASYMYELLAKANFTYGNCASIVALLDKLVQYLMVASQNNSSMIMRKGGSFLVLAELLTIVFANKEDIMAKVHRSFKVHVEVEEAKQNAGKPAPKQQQQGGWLGKGNNTSNSSSSNKAKVINFWCFNPGFGMEQLLNTQVRSVILTSGTLAPLKPLIAELAIPVAQHLENPHIVDQSQVYVKIIGTGPDRQQLISNFKNRDNPKYISSLGQTILNVSRIVPDGLLVFFPSYPMLNKCVDAWQTSGLWADIAAKKPIFLEPRGKDQFTTTMEEFYQAIRDSKGACFMAVCRGKVSEGLDFADRNGRAVIITGLPYPPLKDPKVILKRRYLEANRTKENQLLTGQEWYNLDATRAVNQAIGRVIRHRHDYGAILLCDSRFQDNSQVQQLSKWIRGHLGARPQCSPFGPIVRELRQFFRHAEETMEQPKERTDEPLLKNVYKTEAVTQENNEEKPLFKVKREPGQMATNAAAFKQANEMAIKVEMTNSIKSWTPDDYVSAAGRTQSHSQSKPPNAMDFMSRLDSNVSSIDFNSTGTGNLVKIHKRERSSPTFGDTKSSSQLKKRYKLVDNIKTEPSTSSSCKAPESRADFLREVRCFINQDEFRDFGKALLAYKNGGDEAFESLMSLLFKLLGKPQMRYLLLGIRRYLKNEHKAEFDKRVAT</sequence>
<gene>
    <name type="ORF">GK24923</name>
</gene>
<evidence type="ECO:0000250" key="1"/>
<evidence type="ECO:0000255" key="2">
    <source>
        <dbReference type="HAMAP-Rule" id="MF_03065"/>
    </source>
</evidence>
<evidence type="ECO:0000256" key="3">
    <source>
        <dbReference type="SAM" id="MobiDB-lite"/>
    </source>
</evidence>
<organism>
    <name type="scientific">Drosophila willistoni</name>
    <name type="common">Fruit fly</name>
    <dbReference type="NCBI Taxonomy" id="7260"/>
    <lineage>
        <taxon>Eukaryota</taxon>
        <taxon>Metazoa</taxon>
        <taxon>Ecdysozoa</taxon>
        <taxon>Arthropoda</taxon>
        <taxon>Hexapoda</taxon>
        <taxon>Insecta</taxon>
        <taxon>Pterygota</taxon>
        <taxon>Neoptera</taxon>
        <taxon>Endopterygota</taxon>
        <taxon>Diptera</taxon>
        <taxon>Brachycera</taxon>
        <taxon>Muscomorpha</taxon>
        <taxon>Ephydroidea</taxon>
        <taxon>Drosophilidae</taxon>
        <taxon>Drosophila</taxon>
        <taxon>Sophophora</taxon>
    </lineage>
</organism>
<keyword id="KW-0004">4Fe-4S</keyword>
<keyword id="KW-0067">ATP-binding</keyword>
<keyword id="KW-0227">DNA damage</keyword>
<keyword id="KW-0234">DNA repair</keyword>
<keyword id="KW-0238">DNA-binding</keyword>
<keyword id="KW-0347">Helicase</keyword>
<keyword id="KW-0378">Hydrolase</keyword>
<keyword id="KW-0408">Iron</keyword>
<keyword id="KW-0411">Iron-sulfur</keyword>
<keyword id="KW-0413">Isomerase</keyword>
<keyword id="KW-0479">Metal-binding</keyword>
<keyword id="KW-0547">Nucleotide-binding</keyword>
<keyword id="KW-0539">Nucleus</keyword>
<keyword id="KW-0597">Phosphoprotein</keyword>
<keyword id="KW-1185">Reference proteome</keyword>
<protein>
    <recommendedName>
        <fullName evidence="2">Regulator of telomere elongation helicase 1 homolog</fullName>
        <ecNumber evidence="2">5.6.2.-</ecNumber>
    </recommendedName>
</protein>
<accession>B4NDG5</accession>
<feature type="chain" id="PRO_0000370629" description="Regulator of telomere elongation helicase 1 homolog">
    <location>
        <begin position="1"/>
        <end position="998"/>
    </location>
</feature>
<feature type="domain" description="Helicase ATP-binding" evidence="2">
    <location>
        <begin position="7"/>
        <end position="324"/>
    </location>
</feature>
<feature type="region of interest" description="Disordered" evidence="3">
    <location>
        <begin position="426"/>
        <end position="454"/>
    </location>
</feature>
<feature type="short sequence motif" description="DEAH box">
    <location>
        <begin position="254"/>
        <end position="257"/>
    </location>
</feature>
<feature type="binding site" evidence="2">
    <location>
        <begin position="42"/>
        <end position="49"/>
    </location>
    <ligand>
        <name>ATP</name>
        <dbReference type="ChEBI" id="CHEBI:30616"/>
    </ligand>
</feature>
<feature type="binding site" evidence="2">
    <location>
        <position position="148"/>
    </location>
    <ligand>
        <name>[4Fe-4S] cluster</name>
        <dbReference type="ChEBI" id="CHEBI:49883"/>
    </ligand>
</feature>
<feature type="binding site" evidence="2">
    <location>
        <position position="166"/>
    </location>
    <ligand>
        <name>[4Fe-4S] cluster</name>
        <dbReference type="ChEBI" id="CHEBI:49883"/>
    </ligand>
</feature>
<feature type="binding site" evidence="2">
    <location>
        <position position="175"/>
    </location>
    <ligand>
        <name>[4Fe-4S] cluster</name>
        <dbReference type="ChEBI" id="CHEBI:49883"/>
    </ligand>
</feature>
<feature type="binding site" evidence="2">
    <location>
        <position position="211"/>
    </location>
    <ligand>
        <name>[4Fe-4S] cluster</name>
        <dbReference type="ChEBI" id="CHEBI:49883"/>
    </ligand>
</feature>
<feature type="modified residue" description="Phosphothreonine" evidence="1">
    <location>
        <position position="887"/>
    </location>
</feature>
<name>RTEL1_DROWI</name>
<proteinExistence type="inferred from homology"/>